<protein>
    <recommendedName>
        <fullName evidence="1">Malate synthase G</fullName>
        <ecNumber evidence="1">2.3.3.9</ecNumber>
    </recommendedName>
</protein>
<reference key="1">
    <citation type="submission" date="2007-06" db="EMBL/GenBank/DDBJ databases">
        <authorList>
            <person name="Dodson R.J."/>
            <person name="Harkins D."/>
            <person name="Paulsen I.T."/>
        </authorList>
    </citation>
    <scope>NUCLEOTIDE SEQUENCE [LARGE SCALE GENOMIC DNA]</scope>
    <source>
        <strain>DSM 24068 / PA7</strain>
    </source>
</reference>
<comment type="function">
    <text evidence="1">Involved in the glycolate utilization. Catalyzes the condensation and subsequent hydrolysis of acetyl-coenzyme A (acetyl-CoA) and glyoxylate to form malate and CoA.</text>
</comment>
<comment type="catalytic activity">
    <reaction evidence="1">
        <text>glyoxylate + acetyl-CoA + H2O = (S)-malate + CoA + H(+)</text>
        <dbReference type="Rhea" id="RHEA:18181"/>
        <dbReference type="ChEBI" id="CHEBI:15377"/>
        <dbReference type="ChEBI" id="CHEBI:15378"/>
        <dbReference type="ChEBI" id="CHEBI:15589"/>
        <dbReference type="ChEBI" id="CHEBI:36655"/>
        <dbReference type="ChEBI" id="CHEBI:57287"/>
        <dbReference type="ChEBI" id="CHEBI:57288"/>
        <dbReference type="EC" id="2.3.3.9"/>
    </reaction>
</comment>
<comment type="cofactor">
    <cofactor evidence="1">
        <name>Mg(2+)</name>
        <dbReference type="ChEBI" id="CHEBI:18420"/>
    </cofactor>
</comment>
<comment type="pathway">
    <text evidence="1">Carbohydrate metabolism; glyoxylate cycle; (S)-malate from isocitrate: step 2/2.</text>
</comment>
<comment type="subunit">
    <text evidence="1">Monomer.</text>
</comment>
<comment type="subcellular location">
    <subcellularLocation>
        <location evidence="1">Cytoplasm</location>
    </subcellularLocation>
</comment>
<comment type="similarity">
    <text evidence="1">Belongs to the malate synthase family. GlcB subfamily.</text>
</comment>
<sequence>MTERVQVGGLQVAKVLFDFVNNEAIPGTGVSADSFWTGAEAVINDLAPKNKALLAKRDDLQAKINGWHQARAGQAHDAAAYKAFLEEIGYLLPEAEDFQAGTQNVDDEIARMAGPQLVVPVMNARFALNASNARWGSLYDALYGTDVISEEGGAEKGKGYNKVRGDKVIAFARAFLDEAAPLESGSHVDATSYSVKNGALVVALKNGSETGLKNAGQFLAFQGDAAKPQAVLLKHNGLHFEIQIDPSSPIGQTDAAGVKDVLMEAALTTIMDCEDSVAAVDADDKVVIYRNWLGLMKGNLAEEVSKGGTTFTRTMNPDRVYTGADGSELTLHGRSLLFVRNVGHLMTNDAILDKHGNEVPEGIQDGLFTSLIAIHNLNGNTSRKNSRTGSVYIVKPKMHGPEEAAFTNELFGRVEDVLGLPRNTLKVGIMDEERRTTVNLKACIKAAKDRVVFINTGFLDRTGDEIHTSMEAGAVVRKGAMKSEKWIGAYENNNVDVGLATGLQGKAQIGKGMWAMPDLMAAMLEQKIGHPLAGANTAWVPSPTAATLHALHYHKVDVFARQAELAKRTPASVDDILTIPLAPNTNWTAEEIKNEVDNNAQGILGYVVRWIDQGVGCSKVPDINDVGLMEDRATLRISSQLLANWLRHGVISQEQVVESLKRMAVVVDRQNASDPSYRPMAPDFDDNVAFQAALELVVEGTKQPNGYTEPVLHRRRREFKAKNGL</sequence>
<organism>
    <name type="scientific">Pseudomonas paraeruginosa (strain DSM 24068 / PA7)</name>
    <name type="common">Pseudomonas aeruginosa (strain PA7)</name>
    <dbReference type="NCBI Taxonomy" id="381754"/>
    <lineage>
        <taxon>Bacteria</taxon>
        <taxon>Pseudomonadati</taxon>
        <taxon>Pseudomonadota</taxon>
        <taxon>Gammaproteobacteria</taxon>
        <taxon>Pseudomonadales</taxon>
        <taxon>Pseudomonadaceae</taxon>
        <taxon>Pseudomonas</taxon>
        <taxon>Pseudomonas paraeruginosa</taxon>
    </lineage>
</organism>
<accession>A6UYU5</accession>
<gene>
    <name evidence="1" type="primary">glcB</name>
    <name type="ordered locus">PSPA7_0585</name>
</gene>
<feature type="chain" id="PRO_1000056917" description="Malate synthase G">
    <location>
        <begin position="1"/>
        <end position="725"/>
    </location>
</feature>
<feature type="active site" description="Proton acceptor" evidence="1">
    <location>
        <position position="340"/>
    </location>
</feature>
<feature type="active site" description="Proton donor" evidence="1">
    <location>
        <position position="631"/>
    </location>
</feature>
<feature type="binding site" evidence="1">
    <location>
        <position position="118"/>
    </location>
    <ligand>
        <name>acetyl-CoA</name>
        <dbReference type="ChEBI" id="CHEBI:57288"/>
    </ligand>
</feature>
<feature type="binding site" evidence="1">
    <location>
        <begin position="125"/>
        <end position="126"/>
    </location>
    <ligand>
        <name>acetyl-CoA</name>
        <dbReference type="ChEBI" id="CHEBI:57288"/>
    </ligand>
</feature>
<feature type="binding site" evidence="1">
    <location>
        <position position="276"/>
    </location>
    <ligand>
        <name>acetyl-CoA</name>
        <dbReference type="ChEBI" id="CHEBI:57288"/>
    </ligand>
</feature>
<feature type="binding site" evidence="1">
    <location>
        <position position="313"/>
    </location>
    <ligand>
        <name>acetyl-CoA</name>
        <dbReference type="ChEBI" id="CHEBI:57288"/>
    </ligand>
</feature>
<feature type="binding site" evidence="1">
    <location>
        <position position="340"/>
    </location>
    <ligand>
        <name>glyoxylate</name>
        <dbReference type="ChEBI" id="CHEBI:36655"/>
    </ligand>
</feature>
<feature type="binding site" evidence="1">
    <location>
        <position position="432"/>
    </location>
    <ligand>
        <name>glyoxylate</name>
        <dbReference type="ChEBI" id="CHEBI:36655"/>
    </ligand>
</feature>
<feature type="binding site" evidence="1">
    <location>
        <position position="432"/>
    </location>
    <ligand>
        <name>Mg(2+)</name>
        <dbReference type="ChEBI" id="CHEBI:18420"/>
    </ligand>
</feature>
<feature type="binding site" evidence="1">
    <location>
        <begin position="457"/>
        <end position="460"/>
    </location>
    <ligand>
        <name>glyoxylate</name>
        <dbReference type="ChEBI" id="CHEBI:36655"/>
    </ligand>
</feature>
<feature type="binding site" evidence="1">
    <location>
        <position position="460"/>
    </location>
    <ligand>
        <name>Mg(2+)</name>
        <dbReference type="ChEBI" id="CHEBI:18420"/>
    </ligand>
</feature>
<feature type="binding site" evidence="1">
    <location>
        <position position="541"/>
    </location>
    <ligand>
        <name>acetyl-CoA</name>
        <dbReference type="ChEBI" id="CHEBI:57288"/>
    </ligand>
</feature>
<feature type="modified residue" description="Cysteine sulfenic acid (-SOH)" evidence="1">
    <location>
        <position position="617"/>
    </location>
</feature>
<name>MASZ_PSEP7</name>
<proteinExistence type="inferred from homology"/>
<keyword id="KW-0963">Cytoplasm</keyword>
<keyword id="KW-0329">Glyoxylate bypass</keyword>
<keyword id="KW-0460">Magnesium</keyword>
<keyword id="KW-0479">Metal-binding</keyword>
<keyword id="KW-0558">Oxidation</keyword>
<keyword id="KW-0808">Transferase</keyword>
<keyword id="KW-0816">Tricarboxylic acid cycle</keyword>
<dbReference type="EC" id="2.3.3.9" evidence="1"/>
<dbReference type="EMBL" id="CP000744">
    <property type="protein sequence ID" value="ABR84414.1"/>
    <property type="molecule type" value="Genomic_DNA"/>
</dbReference>
<dbReference type="RefSeq" id="WP_012074057.1">
    <property type="nucleotide sequence ID" value="NC_009656.1"/>
</dbReference>
<dbReference type="SMR" id="A6UYU5"/>
<dbReference type="KEGG" id="pap:PSPA7_0585"/>
<dbReference type="HOGENOM" id="CLU_028446_1_0_6"/>
<dbReference type="UniPathway" id="UPA00703">
    <property type="reaction ID" value="UER00720"/>
</dbReference>
<dbReference type="Proteomes" id="UP000001582">
    <property type="component" value="Chromosome"/>
</dbReference>
<dbReference type="GO" id="GO:0005829">
    <property type="term" value="C:cytosol"/>
    <property type="evidence" value="ECO:0007669"/>
    <property type="project" value="TreeGrafter"/>
</dbReference>
<dbReference type="GO" id="GO:0000287">
    <property type="term" value="F:magnesium ion binding"/>
    <property type="evidence" value="ECO:0007669"/>
    <property type="project" value="TreeGrafter"/>
</dbReference>
<dbReference type="GO" id="GO:0004474">
    <property type="term" value="F:malate synthase activity"/>
    <property type="evidence" value="ECO:0007669"/>
    <property type="project" value="UniProtKB-UniRule"/>
</dbReference>
<dbReference type="GO" id="GO:0009436">
    <property type="term" value="P:glyoxylate catabolic process"/>
    <property type="evidence" value="ECO:0007669"/>
    <property type="project" value="TreeGrafter"/>
</dbReference>
<dbReference type="GO" id="GO:0006097">
    <property type="term" value="P:glyoxylate cycle"/>
    <property type="evidence" value="ECO:0007669"/>
    <property type="project" value="UniProtKB-UniRule"/>
</dbReference>
<dbReference type="GO" id="GO:0006099">
    <property type="term" value="P:tricarboxylic acid cycle"/>
    <property type="evidence" value="ECO:0007669"/>
    <property type="project" value="UniProtKB-KW"/>
</dbReference>
<dbReference type="CDD" id="cd00728">
    <property type="entry name" value="malate_synt_G"/>
    <property type="match status" value="1"/>
</dbReference>
<dbReference type="FunFam" id="3.20.20.360:FF:000002">
    <property type="entry name" value="Malate synthase G"/>
    <property type="match status" value="1"/>
</dbReference>
<dbReference type="Gene3D" id="3.20.20.360">
    <property type="entry name" value="Malate synthase, domain 3"/>
    <property type="match status" value="2"/>
</dbReference>
<dbReference type="Gene3D" id="1.20.1220.12">
    <property type="entry name" value="Malate synthase, domain III"/>
    <property type="match status" value="1"/>
</dbReference>
<dbReference type="HAMAP" id="MF_00641">
    <property type="entry name" value="Malate_synth_G"/>
    <property type="match status" value="1"/>
</dbReference>
<dbReference type="InterPro" id="IPR044856">
    <property type="entry name" value="Malate_synth_C_sf"/>
</dbReference>
<dbReference type="InterPro" id="IPR011076">
    <property type="entry name" value="Malate_synth_sf"/>
</dbReference>
<dbReference type="InterPro" id="IPR001465">
    <property type="entry name" value="Malate_synthase_TIM"/>
</dbReference>
<dbReference type="InterPro" id="IPR006253">
    <property type="entry name" value="Malate_synthG"/>
</dbReference>
<dbReference type="InterPro" id="IPR048355">
    <property type="entry name" value="MS_C"/>
</dbReference>
<dbReference type="InterPro" id="IPR048356">
    <property type="entry name" value="MS_N"/>
</dbReference>
<dbReference type="InterPro" id="IPR046363">
    <property type="entry name" value="MS_N_TIM-barrel_dom"/>
</dbReference>
<dbReference type="InterPro" id="IPR048357">
    <property type="entry name" value="MSG_insertion"/>
</dbReference>
<dbReference type="NCBIfam" id="TIGR01345">
    <property type="entry name" value="malate_syn_G"/>
    <property type="match status" value="1"/>
</dbReference>
<dbReference type="NCBIfam" id="NF002825">
    <property type="entry name" value="PRK02999.1"/>
    <property type="match status" value="1"/>
</dbReference>
<dbReference type="PANTHER" id="PTHR42739">
    <property type="entry name" value="MALATE SYNTHASE G"/>
    <property type="match status" value="1"/>
</dbReference>
<dbReference type="PANTHER" id="PTHR42739:SF1">
    <property type="entry name" value="MALATE SYNTHASE G"/>
    <property type="match status" value="1"/>
</dbReference>
<dbReference type="Pfam" id="PF20659">
    <property type="entry name" value="MS_C"/>
    <property type="match status" value="1"/>
</dbReference>
<dbReference type="Pfam" id="PF20656">
    <property type="entry name" value="MS_N"/>
    <property type="match status" value="1"/>
</dbReference>
<dbReference type="Pfam" id="PF01274">
    <property type="entry name" value="MS_TIM-barrel"/>
    <property type="match status" value="1"/>
</dbReference>
<dbReference type="Pfam" id="PF20658">
    <property type="entry name" value="MSG_insertion"/>
    <property type="match status" value="1"/>
</dbReference>
<dbReference type="SUPFAM" id="SSF51645">
    <property type="entry name" value="Malate synthase G"/>
    <property type="match status" value="1"/>
</dbReference>
<evidence type="ECO:0000255" key="1">
    <source>
        <dbReference type="HAMAP-Rule" id="MF_00641"/>
    </source>
</evidence>